<keyword id="KW-0687">Ribonucleoprotein</keyword>
<keyword id="KW-0689">Ribosomal protein</keyword>
<keyword id="KW-0694">RNA-binding</keyword>
<keyword id="KW-0699">rRNA-binding</keyword>
<keyword id="KW-0820">tRNA-binding</keyword>
<organism>
    <name type="scientific">Vibrio parahaemolyticus serotype O3:K6 (strain RIMD 2210633)</name>
    <dbReference type="NCBI Taxonomy" id="223926"/>
    <lineage>
        <taxon>Bacteria</taxon>
        <taxon>Pseudomonadati</taxon>
        <taxon>Pseudomonadota</taxon>
        <taxon>Gammaproteobacteria</taxon>
        <taxon>Vibrionales</taxon>
        <taxon>Vibrionaceae</taxon>
        <taxon>Vibrio</taxon>
    </lineage>
</organism>
<comment type="function">
    <text evidence="1">This is one of the proteins that bind and probably mediate the attachment of the 5S RNA into the large ribosomal subunit, where it forms part of the central protuberance. In the 70S ribosome it contacts protein S13 of the 30S subunit (bridge B1b), connecting the 2 subunits; this bridge is implicated in subunit movement. Contacts the P site tRNA; the 5S rRNA and some of its associated proteins might help stabilize positioning of ribosome-bound tRNAs.</text>
</comment>
<comment type="subunit">
    <text evidence="1">Part of the 50S ribosomal subunit; part of the 5S rRNA/L5/L18/L25 subcomplex. Contacts the 5S rRNA and the P site tRNA. Forms a bridge to the 30S subunit in the 70S ribosome.</text>
</comment>
<comment type="similarity">
    <text evidence="1">Belongs to the universal ribosomal protein uL5 family.</text>
</comment>
<protein>
    <recommendedName>
        <fullName evidence="1">Large ribosomal subunit protein uL5</fullName>
    </recommendedName>
    <alternativeName>
        <fullName evidence="2">50S ribosomal protein L5</fullName>
    </alternativeName>
</protein>
<proteinExistence type="inferred from homology"/>
<evidence type="ECO:0000255" key="1">
    <source>
        <dbReference type="HAMAP-Rule" id="MF_01333"/>
    </source>
</evidence>
<evidence type="ECO:0000305" key="2"/>
<gene>
    <name evidence="1" type="primary">rplE</name>
    <name type="ordered locus">VP0269</name>
</gene>
<name>RL5_VIBPA</name>
<feature type="chain" id="PRO_0000125023" description="Large ribosomal subunit protein uL5">
    <location>
        <begin position="1"/>
        <end position="179"/>
    </location>
</feature>
<reference key="1">
    <citation type="journal article" date="2003" name="Lancet">
        <title>Genome sequence of Vibrio parahaemolyticus: a pathogenic mechanism distinct from that of V. cholerae.</title>
        <authorList>
            <person name="Makino K."/>
            <person name="Oshima K."/>
            <person name="Kurokawa K."/>
            <person name="Yokoyama K."/>
            <person name="Uda T."/>
            <person name="Tagomori K."/>
            <person name="Iijima Y."/>
            <person name="Najima M."/>
            <person name="Nakano M."/>
            <person name="Yamashita A."/>
            <person name="Kubota Y."/>
            <person name="Kimura S."/>
            <person name="Yasunaga T."/>
            <person name="Honda T."/>
            <person name="Shinagawa H."/>
            <person name="Hattori M."/>
            <person name="Iida T."/>
        </authorList>
    </citation>
    <scope>NUCLEOTIDE SEQUENCE [LARGE SCALE GENOMIC DNA]</scope>
    <source>
        <strain>RIMD 2210633</strain>
    </source>
</reference>
<accession>Q87T01</accession>
<sequence>MAKLHDYYKSSVVAELTKQFSYTSVMQVPRIEKITLNMGVGEAINDKKLLENAASDMATISGQKPLITKARKSVAGFKIREGYPIGCKVTLRGERMWDFLERLINIALPRVRDFRGVSAKSFDGRGNYSMGVREQIIFPEIDFDKVDRVRGLDITITTSAGTDEEGRALLAAFNFPFRK</sequence>
<dbReference type="EMBL" id="BA000031">
    <property type="protein sequence ID" value="BAC58532.1"/>
    <property type="molecule type" value="Genomic_DNA"/>
</dbReference>
<dbReference type="RefSeq" id="NP_796648.1">
    <property type="nucleotide sequence ID" value="NC_004603.1"/>
</dbReference>
<dbReference type="RefSeq" id="WP_005455660.1">
    <property type="nucleotide sequence ID" value="NC_004603.1"/>
</dbReference>
<dbReference type="SMR" id="Q87T01"/>
<dbReference type="GeneID" id="70913523"/>
<dbReference type="KEGG" id="vpa:VP0269"/>
<dbReference type="PATRIC" id="fig|223926.6.peg.260"/>
<dbReference type="eggNOG" id="COG0094">
    <property type="taxonomic scope" value="Bacteria"/>
</dbReference>
<dbReference type="HOGENOM" id="CLU_061015_2_1_6"/>
<dbReference type="Proteomes" id="UP000002493">
    <property type="component" value="Chromosome 1"/>
</dbReference>
<dbReference type="GO" id="GO:1990904">
    <property type="term" value="C:ribonucleoprotein complex"/>
    <property type="evidence" value="ECO:0007669"/>
    <property type="project" value="UniProtKB-KW"/>
</dbReference>
<dbReference type="GO" id="GO:0005840">
    <property type="term" value="C:ribosome"/>
    <property type="evidence" value="ECO:0007669"/>
    <property type="project" value="UniProtKB-KW"/>
</dbReference>
<dbReference type="GO" id="GO:0019843">
    <property type="term" value="F:rRNA binding"/>
    <property type="evidence" value="ECO:0007669"/>
    <property type="project" value="UniProtKB-UniRule"/>
</dbReference>
<dbReference type="GO" id="GO:0003735">
    <property type="term" value="F:structural constituent of ribosome"/>
    <property type="evidence" value="ECO:0007669"/>
    <property type="project" value="InterPro"/>
</dbReference>
<dbReference type="GO" id="GO:0000049">
    <property type="term" value="F:tRNA binding"/>
    <property type="evidence" value="ECO:0007669"/>
    <property type="project" value="UniProtKB-UniRule"/>
</dbReference>
<dbReference type="GO" id="GO:0006412">
    <property type="term" value="P:translation"/>
    <property type="evidence" value="ECO:0007669"/>
    <property type="project" value="UniProtKB-UniRule"/>
</dbReference>
<dbReference type="FunFam" id="3.30.1440.10:FF:000001">
    <property type="entry name" value="50S ribosomal protein L5"/>
    <property type="match status" value="1"/>
</dbReference>
<dbReference type="Gene3D" id="3.30.1440.10">
    <property type="match status" value="1"/>
</dbReference>
<dbReference type="HAMAP" id="MF_01333_B">
    <property type="entry name" value="Ribosomal_uL5_B"/>
    <property type="match status" value="1"/>
</dbReference>
<dbReference type="InterPro" id="IPR002132">
    <property type="entry name" value="Ribosomal_uL5"/>
</dbReference>
<dbReference type="InterPro" id="IPR020930">
    <property type="entry name" value="Ribosomal_uL5_bac-type"/>
</dbReference>
<dbReference type="InterPro" id="IPR031309">
    <property type="entry name" value="Ribosomal_uL5_C"/>
</dbReference>
<dbReference type="InterPro" id="IPR020929">
    <property type="entry name" value="Ribosomal_uL5_CS"/>
</dbReference>
<dbReference type="InterPro" id="IPR022803">
    <property type="entry name" value="Ribosomal_uL5_dom_sf"/>
</dbReference>
<dbReference type="InterPro" id="IPR031310">
    <property type="entry name" value="Ribosomal_uL5_N"/>
</dbReference>
<dbReference type="NCBIfam" id="NF000585">
    <property type="entry name" value="PRK00010.1"/>
    <property type="match status" value="1"/>
</dbReference>
<dbReference type="PANTHER" id="PTHR11994">
    <property type="entry name" value="60S RIBOSOMAL PROTEIN L11-RELATED"/>
    <property type="match status" value="1"/>
</dbReference>
<dbReference type="Pfam" id="PF00281">
    <property type="entry name" value="Ribosomal_L5"/>
    <property type="match status" value="1"/>
</dbReference>
<dbReference type="Pfam" id="PF00673">
    <property type="entry name" value="Ribosomal_L5_C"/>
    <property type="match status" value="1"/>
</dbReference>
<dbReference type="PIRSF" id="PIRSF002161">
    <property type="entry name" value="Ribosomal_L5"/>
    <property type="match status" value="1"/>
</dbReference>
<dbReference type="SUPFAM" id="SSF55282">
    <property type="entry name" value="RL5-like"/>
    <property type="match status" value="1"/>
</dbReference>
<dbReference type="PROSITE" id="PS00358">
    <property type="entry name" value="RIBOSOMAL_L5"/>
    <property type="match status" value="1"/>
</dbReference>